<feature type="chain" id="PRO_0000201787" description="UPF0352 protein YejL">
    <location>
        <begin position="1"/>
        <end position="75"/>
    </location>
</feature>
<reference key="1">
    <citation type="journal article" date="2002" name="Proc. Natl. Acad. Sci. U.S.A.">
        <title>Extensive mosaic structure revealed by the complete genome sequence of uropathogenic Escherichia coli.</title>
        <authorList>
            <person name="Welch R.A."/>
            <person name="Burland V."/>
            <person name="Plunkett G. III"/>
            <person name="Redford P."/>
            <person name="Roesch P."/>
            <person name="Rasko D."/>
            <person name="Buckles E.L."/>
            <person name="Liou S.-R."/>
            <person name="Boutin A."/>
            <person name="Hackett J."/>
            <person name="Stroud D."/>
            <person name="Mayhew G.F."/>
            <person name="Rose D.J."/>
            <person name="Zhou S."/>
            <person name="Schwartz D.C."/>
            <person name="Perna N.T."/>
            <person name="Mobley H.L.T."/>
            <person name="Donnenberg M.S."/>
            <person name="Blattner F.R."/>
        </authorList>
    </citation>
    <scope>NUCLEOTIDE SEQUENCE [LARGE SCALE GENOMIC DNA]</scope>
    <source>
        <strain>CFT073 / ATCC 700928 / UPEC</strain>
    </source>
</reference>
<sequence>MPQISRYSDEQVEQLLAELLNVLEKHKAPTDLSLMVLGNMVTNLINTSIAPAQRQAIANSFARALQSSINEDKAH</sequence>
<gene>
    <name evidence="1" type="primary">yejL</name>
    <name type="ordered locus">c2725</name>
</gene>
<accession>P0AD25</accession>
<accession>P33921</accession>
<name>YEJL_ECOL6</name>
<protein>
    <recommendedName>
        <fullName evidence="1">UPF0352 protein YejL</fullName>
    </recommendedName>
</protein>
<comment type="similarity">
    <text evidence="1">Belongs to the UPF0352 family.</text>
</comment>
<proteinExistence type="inferred from homology"/>
<keyword id="KW-1185">Reference proteome</keyword>
<organism>
    <name type="scientific">Escherichia coli O6:H1 (strain CFT073 / ATCC 700928 / UPEC)</name>
    <dbReference type="NCBI Taxonomy" id="199310"/>
    <lineage>
        <taxon>Bacteria</taxon>
        <taxon>Pseudomonadati</taxon>
        <taxon>Pseudomonadota</taxon>
        <taxon>Gammaproteobacteria</taxon>
        <taxon>Enterobacterales</taxon>
        <taxon>Enterobacteriaceae</taxon>
        <taxon>Escherichia</taxon>
    </lineage>
</organism>
<evidence type="ECO:0000255" key="1">
    <source>
        <dbReference type="HAMAP-Rule" id="MF_00816"/>
    </source>
</evidence>
<dbReference type="EMBL" id="AE014075">
    <property type="protein sequence ID" value="AAN81179.1"/>
    <property type="molecule type" value="Genomic_DNA"/>
</dbReference>
<dbReference type="RefSeq" id="WP_001135667.1">
    <property type="nucleotide sequence ID" value="NZ_CP051263.1"/>
</dbReference>
<dbReference type="SMR" id="P0AD25"/>
<dbReference type="STRING" id="199310.c2725"/>
<dbReference type="KEGG" id="ecc:c2725"/>
<dbReference type="eggNOG" id="COG3082">
    <property type="taxonomic scope" value="Bacteria"/>
</dbReference>
<dbReference type="HOGENOM" id="CLU_175457_0_0_6"/>
<dbReference type="BioCyc" id="ECOL199310:C2725-MONOMER"/>
<dbReference type="Proteomes" id="UP000001410">
    <property type="component" value="Chromosome"/>
</dbReference>
<dbReference type="FunFam" id="1.10.3390.10:FF:000001">
    <property type="entry name" value="UPF0352 protein YejL"/>
    <property type="match status" value="1"/>
</dbReference>
<dbReference type="Gene3D" id="1.10.3390.10">
    <property type="entry name" value="YejL-like"/>
    <property type="match status" value="1"/>
</dbReference>
<dbReference type="HAMAP" id="MF_00816">
    <property type="entry name" value="UPF0352"/>
    <property type="match status" value="1"/>
</dbReference>
<dbReference type="InterPro" id="IPR009857">
    <property type="entry name" value="UPF0352"/>
</dbReference>
<dbReference type="InterPro" id="IPR023202">
    <property type="entry name" value="YejL_sf"/>
</dbReference>
<dbReference type="NCBIfam" id="NF010242">
    <property type="entry name" value="PRK13689.1"/>
    <property type="match status" value="1"/>
</dbReference>
<dbReference type="Pfam" id="PF07208">
    <property type="entry name" value="DUF1414"/>
    <property type="match status" value="1"/>
</dbReference>
<dbReference type="PIRSF" id="PIRSF006188">
    <property type="entry name" value="UCP006188"/>
    <property type="match status" value="1"/>
</dbReference>
<dbReference type="SUPFAM" id="SSF158651">
    <property type="entry name" value="YejL-like"/>
    <property type="match status" value="1"/>
</dbReference>